<comment type="function">
    <text evidence="1">Pre-mRNA processing factor involved in disassembly of spliceosomes after the release of mature mRNA.</text>
</comment>
<comment type="catalytic activity">
    <reaction>
        <text>ATP + H2O = ADP + phosphate + H(+)</text>
        <dbReference type="Rhea" id="RHEA:13065"/>
        <dbReference type="ChEBI" id="CHEBI:15377"/>
        <dbReference type="ChEBI" id="CHEBI:15378"/>
        <dbReference type="ChEBI" id="CHEBI:30616"/>
        <dbReference type="ChEBI" id="CHEBI:43474"/>
        <dbReference type="ChEBI" id="CHEBI:456216"/>
        <dbReference type="EC" id="3.6.4.13"/>
    </reaction>
</comment>
<comment type="subcellular location">
    <subcellularLocation>
        <location evidence="1">Nucleus</location>
    </subcellularLocation>
</comment>
<comment type="similarity">
    <text evidence="4">Belongs to the DEAD box helicase family. DEAH subfamily. DDX15/PRP43 sub-subfamily.</text>
</comment>
<evidence type="ECO:0000250" key="1"/>
<evidence type="ECO:0000255" key="2">
    <source>
        <dbReference type="PROSITE-ProRule" id="PRU00541"/>
    </source>
</evidence>
<evidence type="ECO:0000255" key="3">
    <source>
        <dbReference type="PROSITE-ProRule" id="PRU00542"/>
    </source>
</evidence>
<evidence type="ECO:0000305" key="4"/>
<sequence length="455" mass="51479">IKYMTDGMLLREGMTDPLLERYGVILLDEAHERTVATDILMGLLKEVEKQRSDLKLVVMSATLDAGKFQHYFDNAPLMTVPGRTHPVEIFYTPEPERDYLEAAIRTVVQIHMCEEVEGDVLLFLTGQEEIEEACKRIKREVDNLGPEVGDLKTIPLYSTLPPAMQQRIFEHAPPNKANGAIGRKVVVSTNIAETSLTIDGVVFVIDPGFAKQKVYNPRIRVESLLVSPISKASAQQRVGRAGRTRPGKCFRLYTEKAYDSEMQDNTYPEILRSNLGTVVLQLKKLGIDDLVHFDFMDPPAPETLMRALELLNYLGALDDSGDLTRLGSMMAEFPLDPQLAKMVIASTDYSCSNEILSVTAMLSVPQCFLRPNEAKKLADEAKMRFAHIDGDHLTLLNVYHAFKQNNEDPQWCYDNFIQYRSLKSADSVRQQLARIMDRFALQRTSTNFNSKDYYL</sequence>
<accession>O17438</accession>
<feature type="chain" id="PRO_0000055143" description="Putative pre-mRNA-splicing factor ATP-dependent RNA helicase PRP1">
    <location>
        <begin position="1" status="less than"/>
        <end position="455" status="greater than"/>
    </location>
</feature>
<feature type="domain" description="Helicase ATP-binding" evidence="2">
    <location>
        <begin position="1" status="less than"/>
        <end position="81"/>
    </location>
</feature>
<feature type="domain" description="Helicase C-terminal" evidence="3">
    <location>
        <begin position="106"/>
        <end position="286"/>
    </location>
</feature>
<feature type="short sequence motif" description="DEAH box">
    <location>
        <begin position="28"/>
        <end position="31"/>
    </location>
</feature>
<feature type="non-terminal residue">
    <location>
        <position position="1"/>
    </location>
</feature>
<feature type="non-terminal residue">
    <location>
        <position position="455"/>
    </location>
</feature>
<name>DHX15_STRPU</name>
<reference key="1">
    <citation type="submission" date="1997-11" db="EMBL/GenBank/DDBJ databases">
        <authorList>
            <person name="Moy G.M."/>
            <person name="Schulz J.R."/>
            <person name="Vacquier V.D."/>
        </authorList>
    </citation>
    <scope>NUCLEOTIDE SEQUENCE [MRNA]</scope>
    <source>
        <tissue>Testis</tissue>
    </source>
</reference>
<gene>
    <name type="primary">PRP1</name>
</gene>
<proteinExistence type="evidence at transcript level"/>
<protein>
    <recommendedName>
        <fullName>Putative pre-mRNA-splicing factor ATP-dependent RNA helicase PRP1</fullName>
        <ecNumber>3.6.4.13</ecNumber>
    </recommendedName>
</protein>
<keyword id="KW-0067">ATP-binding</keyword>
<keyword id="KW-0347">Helicase</keyword>
<keyword id="KW-0378">Hydrolase</keyword>
<keyword id="KW-0507">mRNA processing</keyword>
<keyword id="KW-0508">mRNA splicing</keyword>
<keyword id="KW-0547">Nucleotide-binding</keyword>
<keyword id="KW-0539">Nucleus</keyword>
<keyword id="KW-1185">Reference proteome</keyword>
<dbReference type="EC" id="3.6.4.13"/>
<dbReference type="EMBL" id="AF028244">
    <property type="protein sequence ID" value="AAB86472.1"/>
    <property type="molecule type" value="mRNA"/>
</dbReference>
<dbReference type="SMR" id="O17438"/>
<dbReference type="STRING" id="7668.O17438"/>
<dbReference type="eggNOG" id="KOG0925">
    <property type="taxonomic scope" value="Eukaryota"/>
</dbReference>
<dbReference type="HOGENOM" id="CLU_001832_5_11_1"/>
<dbReference type="InParanoid" id="O17438"/>
<dbReference type="Proteomes" id="UP000007110">
    <property type="component" value="Unassembled WGS sequence"/>
</dbReference>
<dbReference type="GO" id="GO:0005681">
    <property type="term" value="C:spliceosomal complex"/>
    <property type="evidence" value="ECO:0000318"/>
    <property type="project" value="GO_Central"/>
</dbReference>
<dbReference type="GO" id="GO:0005524">
    <property type="term" value="F:ATP binding"/>
    <property type="evidence" value="ECO:0007669"/>
    <property type="project" value="UniProtKB-KW"/>
</dbReference>
<dbReference type="GO" id="GO:0016887">
    <property type="term" value="F:ATP hydrolysis activity"/>
    <property type="evidence" value="ECO:0007669"/>
    <property type="project" value="RHEA"/>
</dbReference>
<dbReference type="GO" id="GO:0004386">
    <property type="term" value="F:helicase activity"/>
    <property type="evidence" value="ECO:0000318"/>
    <property type="project" value="GO_Central"/>
</dbReference>
<dbReference type="GO" id="GO:0003723">
    <property type="term" value="F:RNA binding"/>
    <property type="evidence" value="ECO:0000318"/>
    <property type="project" value="GO_Central"/>
</dbReference>
<dbReference type="GO" id="GO:0003724">
    <property type="term" value="F:RNA helicase activity"/>
    <property type="evidence" value="ECO:0007669"/>
    <property type="project" value="UniProtKB-EC"/>
</dbReference>
<dbReference type="GO" id="GO:0006397">
    <property type="term" value="P:mRNA processing"/>
    <property type="evidence" value="ECO:0007669"/>
    <property type="project" value="UniProtKB-KW"/>
</dbReference>
<dbReference type="GO" id="GO:0008380">
    <property type="term" value="P:RNA splicing"/>
    <property type="evidence" value="ECO:0007669"/>
    <property type="project" value="UniProtKB-KW"/>
</dbReference>
<dbReference type="CDD" id="cd18791">
    <property type="entry name" value="SF2_C_RHA"/>
    <property type="match status" value="1"/>
</dbReference>
<dbReference type="FunFam" id="1.20.120.1080:FF:000003">
    <property type="entry name" value="Pre-mRNA-splicing factor ATP-dependent RNA helicase PRP43"/>
    <property type="match status" value="1"/>
</dbReference>
<dbReference type="FunFam" id="3.40.50.300:FF:006066">
    <property type="entry name" value="Predicted protein"/>
    <property type="match status" value="1"/>
</dbReference>
<dbReference type="Gene3D" id="1.20.120.1080">
    <property type="match status" value="1"/>
</dbReference>
<dbReference type="Gene3D" id="3.40.50.300">
    <property type="entry name" value="P-loop containing nucleotide triphosphate hydrolases"/>
    <property type="match status" value="2"/>
</dbReference>
<dbReference type="InterPro" id="IPR002464">
    <property type="entry name" value="DNA/RNA_helicase_DEAH_CS"/>
</dbReference>
<dbReference type="InterPro" id="IPR048333">
    <property type="entry name" value="HA2_WH"/>
</dbReference>
<dbReference type="InterPro" id="IPR007502">
    <property type="entry name" value="Helicase-assoc_dom"/>
</dbReference>
<dbReference type="InterPro" id="IPR014001">
    <property type="entry name" value="Helicase_ATP-bd"/>
</dbReference>
<dbReference type="InterPro" id="IPR001650">
    <property type="entry name" value="Helicase_C-like"/>
</dbReference>
<dbReference type="InterPro" id="IPR027417">
    <property type="entry name" value="P-loop_NTPase"/>
</dbReference>
<dbReference type="PANTHER" id="PTHR18934">
    <property type="entry name" value="ATP-DEPENDENT RNA HELICASE"/>
    <property type="match status" value="1"/>
</dbReference>
<dbReference type="PANTHER" id="PTHR18934:SF109">
    <property type="entry name" value="ATP-DEPENDENT RNA HELICASE DHX15 HOMOLOG"/>
    <property type="match status" value="1"/>
</dbReference>
<dbReference type="Pfam" id="PF21010">
    <property type="entry name" value="HA2_C"/>
    <property type="match status" value="1"/>
</dbReference>
<dbReference type="Pfam" id="PF04408">
    <property type="entry name" value="HA2_N"/>
    <property type="match status" value="1"/>
</dbReference>
<dbReference type="Pfam" id="PF00271">
    <property type="entry name" value="Helicase_C"/>
    <property type="match status" value="1"/>
</dbReference>
<dbReference type="SMART" id="SM00847">
    <property type="entry name" value="HA2"/>
    <property type="match status" value="1"/>
</dbReference>
<dbReference type="SMART" id="SM00490">
    <property type="entry name" value="HELICc"/>
    <property type="match status" value="1"/>
</dbReference>
<dbReference type="SUPFAM" id="SSF52540">
    <property type="entry name" value="P-loop containing nucleoside triphosphate hydrolases"/>
    <property type="match status" value="1"/>
</dbReference>
<dbReference type="PROSITE" id="PS00690">
    <property type="entry name" value="DEAH_ATP_HELICASE"/>
    <property type="match status" value="1"/>
</dbReference>
<dbReference type="PROSITE" id="PS51192">
    <property type="entry name" value="HELICASE_ATP_BIND_1"/>
    <property type="match status" value="1"/>
</dbReference>
<dbReference type="PROSITE" id="PS51194">
    <property type="entry name" value="HELICASE_CTER"/>
    <property type="match status" value="1"/>
</dbReference>
<organism>
    <name type="scientific">Strongylocentrotus purpuratus</name>
    <name type="common">Purple sea urchin</name>
    <dbReference type="NCBI Taxonomy" id="7668"/>
    <lineage>
        <taxon>Eukaryota</taxon>
        <taxon>Metazoa</taxon>
        <taxon>Echinodermata</taxon>
        <taxon>Eleutherozoa</taxon>
        <taxon>Echinozoa</taxon>
        <taxon>Echinoidea</taxon>
        <taxon>Euechinoidea</taxon>
        <taxon>Echinacea</taxon>
        <taxon>Camarodonta</taxon>
        <taxon>Echinidea</taxon>
        <taxon>Strongylocentrotidae</taxon>
        <taxon>Strongylocentrotus</taxon>
    </lineage>
</organism>